<organism>
    <name type="scientific">Escherichia coli (strain K12)</name>
    <dbReference type="NCBI Taxonomy" id="83333"/>
    <lineage>
        <taxon>Bacteria</taxon>
        <taxon>Pseudomonadati</taxon>
        <taxon>Pseudomonadota</taxon>
        <taxon>Gammaproteobacteria</taxon>
        <taxon>Enterobacterales</taxon>
        <taxon>Enterobacteriaceae</taxon>
        <taxon>Escherichia</taxon>
    </lineage>
</organism>
<reference key="1">
    <citation type="journal article" date="1995" name="Nucleic Acids Res.">
        <title>Analysis of the Escherichia coli genome VI: DNA sequence of the region from 92.8 through 100 minutes.</title>
        <authorList>
            <person name="Burland V.D."/>
            <person name="Plunkett G. III"/>
            <person name="Sofia H.J."/>
            <person name="Daniels D.L."/>
            <person name="Blattner F.R."/>
        </authorList>
    </citation>
    <scope>NUCLEOTIDE SEQUENCE [LARGE SCALE GENOMIC DNA]</scope>
    <source>
        <strain>K12 / MG1655 / ATCC 47076</strain>
    </source>
</reference>
<reference key="2">
    <citation type="journal article" date="1997" name="Science">
        <title>The complete genome sequence of Escherichia coli K-12.</title>
        <authorList>
            <person name="Blattner F.R."/>
            <person name="Plunkett G. III"/>
            <person name="Bloch C.A."/>
            <person name="Perna N.T."/>
            <person name="Burland V."/>
            <person name="Riley M."/>
            <person name="Collado-Vides J."/>
            <person name="Glasner J.D."/>
            <person name="Rode C.K."/>
            <person name="Mayhew G.F."/>
            <person name="Gregor J."/>
            <person name="Davis N.W."/>
            <person name="Kirkpatrick H.A."/>
            <person name="Goeden M.A."/>
            <person name="Rose D.J."/>
            <person name="Mau B."/>
            <person name="Shao Y."/>
        </authorList>
    </citation>
    <scope>NUCLEOTIDE SEQUENCE [LARGE SCALE GENOMIC DNA]</scope>
    <source>
        <strain>K12 / MG1655 / ATCC 47076</strain>
    </source>
</reference>
<reference key="3">
    <citation type="journal article" date="2006" name="Mol. Syst. Biol.">
        <title>Highly accurate genome sequences of Escherichia coli K-12 strains MG1655 and W3110.</title>
        <authorList>
            <person name="Hayashi K."/>
            <person name="Morooka N."/>
            <person name="Yamamoto Y."/>
            <person name="Fujita K."/>
            <person name="Isono K."/>
            <person name="Choi S."/>
            <person name="Ohtsubo E."/>
            <person name="Baba T."/>
            <person name="Wanner B.L."/>
            <person name="Mori H."/>
            <person name="Horiuchi T."/>
        </authorList>
    </citation>
    <scope>NUCLEOTIDE SEQUENCE [LARGE SCALE GENOMIC DNA]</scope>
    <source>
        <strain>K12 / W3110 / ATCC 27325 / DSM 5911</strain>
    </source>
</reference>
<feature type="chain" id="PRO_0000169747" description="Uncharacterized protein YjfI">
    <location>
        <begin position="1"/>
        <end position="133"/>
    </location>
</feature>
<keyword id="KW-1185">Reference proteome</keyword>
<sequence>MTWNPLALATALQTVPEQNIDVTNSENALIIKMNDYGDLQINILFTSRQMIIETFICPVSSISNPDEFNTFLLRNQKMMPLSSVGISSVQQEEYYIVFGALSLKSSLEDILLEITSLVDNALDLAEITEEYSH</sequence>
<proteinExistence type="predicted"/>
<accession>P0AF76</accession>
<accession>P39291</accession>
<accession>Q2M6C4</accession>
<gene>
    <name type="primary">yjfI</name>
    <name type="ordered locus">b4181</name>
    <name type="ordered locus">JW4139</name>
</gene>
<protein>
    <recommendedName>
        <fullName>Uncharacterized protein YjfI</fullName>
    </recommendedName>
</protein>
<name>YJFI_ECOLI</name>
<dbReference type="EMBL" id="U14003">
    <property type="protein sequence ID" value="AAA97077.1"/>
    <property type="molecule type" value="Genomic_DNA"/>
</dbReference>
<dbReference type="EMBL" id="U00096">
    <property type="protein sequence ID" value="AAC77138.1"/>
    <property type="molecule type" value="Genomic_DNA"/>
</dbReference>
<dbReference type="EMBL" id="AP009048">
    <property type="protein sequence ID" value="BAE78182.1"/>
    <property type="molecule type" value="Genomic_DNA"/>
</dbReference>
<dbReference type="PIR" id="S56406">
    <property type="entry name" value="S56406"/>
</dbReference>
<dbReference type="RefSeq" id="NP_418602.1">
    <property type="nucleotide sequence ID" value="NC_000913.3"/>
</dbReference>
<dbReference type="RefSeq" id="WP_000220128.1">
    <property type="nucleotide sequence ID" value="NZ_SSUV01000014.1"/>
</dbReference>
<dbReference type="SMR" id="P0AF76"/>
<dbReference type="BioGRID" id="4261346">
    <property type="interactions" value="15"/>
</dbReference>
<dbReference type="BioGRID" id="852996">
    <property type="interactions" value="5"/>
</dbReference>
<dbReference type="DIP" id="DIP-48050N"/>
<dbReference type="FunCoup" id="P0AF76">
    <property type="interactions" value="172"/>
</dbReference>
<dbReference type="IntAct" id="P0AF76">
    <property type="interactions" value="10"/>
</dbReference>
<dbReference type="STRING" id="511145.b4181"/>
<dbReference type="PaxDb" id="511145-b4181"/>
<dbReference type="EnsemblBacteria" id="AAC77138">
    <property type="protein sequence ID" value="AAC77138"/>
    <property type="gene ID" value="b4181"/>
</dbReference>
<dbReference type="GeneID" id="948704"/>
<dbReference type="KEGG" id="ecj:JW4139"/>
<dbReference type="KEGG" id="eco:b4181"/>
<dbReference type="KEGG" id="ecoc:C3026_22590"/>
<dbReference type="PATRIC" id="fig|511145.12.peg.4313"/>
<dbReference type="EchoBASE" id="EB2377"/>
<dbReference type="eggNOG" id="COG3789">
    <property type="taxonomic scope" value="Bacteria"/>
</dbReference>
<dbReference type="HOGENOM" id="CLU_110701_0_0_6"/>
<dbReference type="InParanoid" id="P0AF76"/>
<dbReference type="OMA" id="EWYELFG"/>
<dbReference type="OrthoDB" id="7677665at2"/>
<dbReference type="PhylomeDB" id="P0AF76"/>
<dbReference type="BioCyc" id="EcoCyc:G7846-MONOMER"/>
<dbReference type="PRO" id="PR:P0AF76"/>
<dbReference type="Proteomes" id="UP000000625">
    <property type="component" value="Chromosome"/>
</dbReference>
<dbReference type="InterPro" id="IPR019231">
    <property type="entry name" value="DUF2170"/>
</dbReference>
<dbReference type="Pfam" id="PF09938">
    <property type="entry name" value="DUF2170"/>
    <property type="match status" value="1"/>
</dbReference>